<comment type="catalytic activity">
    <reaction>
        <text>(S)-malate + NAD(+) = pyruvate + CO2 + NADH</text>
        <dbReference type="Rhea" id="RHEA:12653"/>
        <dbReference type="ChEBI" id="CHEBI:15361"/>
        <dbReference type="ChEBI" id="CHEBI:15589"/>
        <dbReference type="ChEBI" id="CHEBI:16526"/>
        <dbReference type="ChEBI" id="CHEBI:57540"/>
        <dbReference type="ChEBI" id="CHEBI:57945"/>
        <dbReference type="EC" id="1.1.1.38"/>
    </reaction>
</comment>
<comment type="catalytic activity">
    <reaction>
        <text>oxaloacetate + H(+) = pyruvate + CO2</text>
        <dbReference type="Rhea" id="RHEA:15641"/>
        <dbReference type="ChEBI" id="CHEBI:15361"/>
        <dbReference type="ChEBI" id="CHEBI:15378"/>
        <dbReference type="ChEBI" id="CHEBI:16452"/>
        <dbReference type="ChEBI" id="CHEBI:16526"/>
        <dbReference type="EC" id="1.1.1.38"/>
    </reaction>
</comment>
<comment type="cofactor">
    <cofactor evidence="1">
        <name>Mg(2+)</name>
        <dbReference type="ChEBI" id="CHEBI:18420"/>
    </cofactor>
    <cofactor evidence="1">
        <name>Mn(2+)</name>
        <dbReference type="ChEBI" id="CHEBI:29035"/>
    </cofactor>
    <text evidence="1">Divalent metal cations. Prefers magnesium or manganese.</text>
</comment>
<comment type="similarity">
    <text evidence="3">Belongs to the malic enzymes family.</text>
</comment>
<feature type="chain" id="PRO_0000160248" description="Putative malate oxidoreductase [NAD]">
    <location>
        <begin position="1"/>
        <end position="548"/>
    </location>
</feature>
<feature type="active site" description="Proton donor" evidence="2">
    <location>
        <position position="96"/>
    </location>
</feature>
<feature type="active site" description="Proton acceptor" evidence="2">
    <location>
        <position position="169"/>
    </location>
</feature>
<feature type="binding site" evidence="2">
    <location>
        <position position="240"/>
    </location>
    <ligand>
        <name>a divalent metal cation</name>
        <dbReference type="ChEBI" id="CHEBI:60240"/>
    </ligand>
</feature>
<feature type="binding site" evidence="2">
    <location>
        <position position="241"/>
    </location>
    <ligand>
        <name>a divalent metal cation</name>
        <dbReference type="ChEBI" id="CHEBI:60240"/>
    </ligand>
</feature>
<feature type="binding site" evidence="2">
    <location>
        <position position="264"/>
    </location>
    <ligand>
        <name>a divalent metal cation</name>
        <dbReference type="ChEBI" id="CHEBI:60240"/>
    </ligand>
</feature>
<feature type="binding site" evidence="2">
    <location>
        <begin position="297"/>
        <end position="300"/>
    </location>
    <ligand>
        <name>NAD(+)</name>
        <dbReference type="ChEBI" id="CHEBI:57540"/>
    </ligand>
</feature>
<feature type="binding site" evidence="2">
    <location>
        <position position="410"/>
    </location>
    <ligand>
        <name>NAD(+)</name>
        <dbReference type="ChEBI" id="CHEBI:57540"/>
    </ligand>
</feature>
<feature type="binding site" evidence="2">
    <location>
        <position position="455"/>
    </location>
    <ligand>
        <name>NAD(+)</name>
        <dbReference type="ChEBI" id="CHEBI:57540"/>
    </ligand>
</feature>
<name>MAOX_MYCTU</name>
<reference key="1">
    <citation type="journal article" date="1998" name="Nature">
        <title>Deciphering the biology of Mycobacterium tuberculosis from the complete genome sequence.</title>
        <authorList>
            <person name="Cole S.T."/>
            <person name="Brosch R."/>
            <person name="Parkhill J."/>
            <person name="Garnier T."/>
            <person name="Churcher C.M."/>
            <person name="Harris D.E."/>
            <person name="Gordon S.V."/>
            <person name="Eiglmeier K."/>
            <person name="Gas S."/>
            <person name="Barry C.E. III"/>
            <person name="Tekaia F."/>
            <person name="Badcock K."/>
            <person name="Basham D."/>
            <person name="Brown D."/>
            <person name="Chillingworth T."/>
            <person name="Connor R."/>
            <person name="Davies R.M."/>
            <person name="Devlin K."/>
            <person name="Feltwell T."/>
            <person name="Gentles S."/>
            <person name="Hamlin N."/>
            <person name="Holroyd S."/>
            <person name="Hornsby T."/>
            <person name="Jagels K."/>
            <person name="Krogh A."/>
            <person name="McLean J."/>
            <person name="Moule S."/>
            <person name="Murphy L.D."/>
            <person name="Oliver S."/>
            <person name="Osborne J."/>
            <person name="Quail M.A."/>
            <person name="Rajandream M.A."/>
            <person name="Rogers J."/>
            <person name="Rutter S."/>
            <person name="Seeger K."/>
            <person name="Skelton S."/>
            <person name="Squares S."/>
            <person name="Squares R."/>
            <person name="Sulston J.E."/>
            <person name="Taylor K."/>
            <person name="Whitehead S."/>
            <person name="Barrell B.G."/>
        </authorList>
    </citation>
    <scope>NUCLEOTIDE SEQUENCE [LARGE SCALE GENOMIC DNA]</scope>
    <source>
        <strain>ATCC 25618 / H37Rv</strain>
    </source>
</reference>
<reference key="2">
    <citation type="journal article" date="2011" name="Mol. Cell. Proteomics">
        <title>Proteogenomic analysis of Mycobacterium tuberculosis by high resolution mass spectrometry.</title>
        <authorList>
            <person name="Kelkar D.S."/>
            <person name="Kumar D."/>
            <person name="Kumar P."/>
            <person name="Balakrishnan L."/>
            <person name="Muthusamy B."/>
            <person name="Yadav A.K."/>
            <person name="Shrivastava P."/>
            <person name="Marimuthu A."/>
            <person name="Anand S."/>
            <person name="Sundaram H."/>
            <person name="Kingsbury R."/>
            <person name="Harsha H.C."/>
            <person name="Nair B."/>
            <person name="Prasad T.S."/>
            <person name="Chauhan D.S."/>
            <person name="Katoch K."/>
            <person name="Katoch V.M."/>
            <person name="Kumar P."/>
            <person name="Chaerkady R."/>
            <person name="Ramachandran S."/>
            <person name="Dash D."/>
            <person name="Pandey A."/>
        </authorList>
    </citation>
    <scope>IDENTIFICATION BY MASS SPECTROMETRY [LARGE SCALE ANALYSIS]</scope>
    <source>
        <strain>ATCC 25618 / H37Rv</strain>
    </source>
</reference>
<organism>
    <name type="scientific">Mycobacterium tuberculosis (strain ATCC 25618 / H37Rv)</name>
    <dbReference type="NCBI Taxonomy" id="83332"/>
    <lineage>
        <taxon>Bacteria</taxon>
        <taxon>Bacillati</taxon>
        <taxon>Actinomycetota</taxon>
        <taxon>Actinomycetes</taxon>
        <taxon>Mycobacteriales</taxon>
        <taxon>Mycobacteriaceae</taxon>
        <taxon>Mycobacterium</taxon>
        <taxon>Mycobacterium tuberculosis complex</taxon>
    </lineage>
</organism>
<sequence length="548" mass="59423">MSDARVPRIPAALSAPSLNRGVGFTHAQRRRLGLTGRLPSAVLTLDQQAERVWHQLQSLATELGRNLLLEQLHYRHEVLYFKVLADHLPELMPVVYTPTVGEAIQRFSDEYRGQRGLFLSIDEPDEIEEAFNTLGLGPEDVDLIVCTDAEAILGIGDWGVGGIQIAVGKLALYTAGGGVDPRRCLAVSLDVGTDNEQLLADPFYLGNRHARRRGREYDEFVSRYIETAQRLFPRAILHFEDFGPANARKILDTYGTDYCVFNDDMQGTGAVVLAAVYSGLKVTGIPLRDQTIVVFGAGTAGMGIADQIRDAMVADGATLEQAVSQIWPIDRPGLLFDDMDDLRDFQVPYAKNRHQLGVAVGDRVGLSDAIKIASPTILLGCSTVYGAFTKEVVEAMTASCKHPMIFPLSNPTSRMEAIPADVLAWSNGRALLATGSPVAPVEFDETTYVIGQANNVLAFPGIGLGVIVAGARLITRRMLHAAAKAIAHQANPTNPGDSLLPDVQNLRAISTTVAEAVYRAAVQDGVASRTHDDVRQAIVDTMWLPAYD</sequence>
<proteinExistence type="evidence at protein level"/>
<keyword id="KW-0002">3D-structure</keyword>
<keyword id="KW-0479">Metal-binding</keyword>
<keyword id="KW-0520">NAD</keyword>
<keyword id="KW-0560">Oxidoreductase</keyword>
<keyword id="KW-1185">Reference proteome</keyword>
<gene>
    <name type="primary">mez</name>
    <name type="ordered locus">Rv2332</name>
    <name type="ORF">MTCY3G12.02c</name>
    <name type="ORF">MTCY98.01</name>
</gene>
<protein>
    <recommendedName>
        <fullName>Putative malate oxidoreductase [NAD]</fullName>
        <ecNumber>1.1.1.38</ecNumber>
    </recommendedName>
    <alternativeName>
        <fullName>Malic enzyme</fullName>
    </alternativeName>
</protein>
<dbReference type="EC" id="1.1.1.38"/>
<dbReference type="EMBL" id="AL123456">
    <property type="protein sequence ID" value="CCP45120.1"/>
    <property type="molecule type" value="Genomic_DNA"/>
</dbReference>
<dbReference type="PIR" id="E70705">
    <property type="entry name" value="E70705"/>
</dbReference>
<dbReference type="RefSeq" id="NP_216848.2">
    <property type="nucleotide sequence ID" value="NC_000962.3"/>
</dbReference>
<dbReference type="RefSeq" id="WP_003899273.1">
    <property type="nucleotide sequence ID" value="NZ_NVQJ01000012.1"/>
</dbReference>
<dbReference type="PDB" id="6URF">
    <property type="method" value="X-ray"/>
    <property type="resolution" value="3.60 A"/>
    <property type="chains" value="A/B/C/D=1-548"/>
</dbReference>
<dbReference type="PDBsum" id="6URF"/>
<dbReference type="SMR" id="P9WK25"/>
<dbReference type="FunCoup" id="P9WK25">
    <property type="interactions" value="517"/>
</dbReference>
<dbReference type="STRING" id="83332.Rv2332"/>
<dbReference type="PaxDb" id="83332-Rv2332"/>
<dbReference type="DNASU" id="887962"/>
<dbReference type="GeneID" id="887962"/>
<dbReference type="KEGG" id="mtu:Rv2332"/>
<dbReference type="KEGG" id="mtv:RVBD_2332"/>
<dbReference type="TubercuList" id="Rv2332"/>
<dbReference type="eggNOG" id="COG0281">
    <property type="taxonomic scope" value="Bacteria"/>
</dbReference>
<dbReference type="InParanoid" id="P9WK25"/>
<dbReference type="OrthoDB" id="3314528at2"/>
<dbReference type="PhylomeDB" id="P9WK25"/>
<dbReference type="Proteomes" id="UP000001584">
    <property type="component" value="Chromosome"/>
</dbReference>
<dbReference type="GO" id="GO:0005829">
    <property type="term" value="C:cytosol"/>
    <property type="evidence" value="ECO:0007005"/>
    <property type="project" value="MTBBASE"/>
</dbReference>
<dbReference type="GO" id="GO:0004471">
    <property type="term" value="F:malate dehydrogenase (decarboxylating) (NAD+) activity"/>
    <property type="evidence" value="ECO:0007669"/>
    <property type="project" value="RHEA"/>
</dbReference>
<dbReference type="GO" id="GO:0004470">
    <property type="term" value="F:malic enzyme activity"/>
    <property type="evidence" value="ECO:0000318"/>
    <property type="project" value="GO_Central"/>
</dbReference>
<dbReference type="GO" id="GO:0046872">
    <property type="term" value="F:metal ion binding"/>
    <property type="evidence" value="ECO:0007669"/>
    <property type="project" value="UniProtKB-KW"/>
</dbReference>
<dbReference type="GO" id="GO:0051287">
    <property type="term" value="F:NAD binding"/>
    <property type="evidence" value="ECO:0007669"/>
    <property type="project" value="InterPro"/>
</dbReference>
<dbReference type="GO" id="GO:0008948">
    <property type="term" value="F:oxaloacetate decarboxylase activity"/>
    <property type="evidence" value="ECO:0007669"/>
    <property type="project" value="RHEA"/>
</dbReference>
<dbReference type="GO" id="GO:0006108">
    <property type="term" value="P:malate metabolic process"/>
    <property type="evidence" value="ECO:0000318"/>
    <property type="project" value="GO_Central"/>
</dbReference>
<dbReference type="GO" id="GO:0006090">
    <property type="term" value="P:pyruvate metabolic process"/>
    <property type="evidence" value="ECO:0000318"/>
    <property type="project" value="GO_Central"/>
</dbReference>
<dbReference type="CDD" id="cd05312">
    <property type="entry name" value="NAD_bind_1_malic_enz"/>
    <property type="match status" value="1"/>
</dbReference>
<dbReference type="FunFam" id="3.40.50.10380:FF:000001">
    <property type="entry name" value="NAD-dependent malic enzyme"/>
    <property type="match status" value="1"/>
</dbReference>
<dbReference type="Gene3D" id="3.40.50.10380">
    <property type="entry name" value="Malic enzyme, N-terminal domain"/>
    <property type="match status" value="1"/>
</dbReference>
<dbReference type="Gene3D" id="3.40.50.720">
    <property type="entry name" value="NAD(P)-binding Rossmann-like Domain"/>
    <property type="match status" value="1"/>
</dbReference>
<dbReference type="InterPro" id="IPR046346">
    <property type="entry name" value="Aminoacid_DH-like_N_sf"/>
</dbReference>
<dbReference type="InterPro" id="IPR015884">
    <property type="entry name" value="Malic_enzyme_CS"/>
</dbReference>
<dbReference type="InterPro" id="IPR012301">
    <property type="entry name" value="Malic_N_dom"/>
</dbReference>
<dbReference type="InterPro" id="IPR037062">
    <property type="entry name" value="Malic_N_dom_sf"/>
</dbReference>
<dbReference type="InterPro" id="IPR012302">
    <property type="entry name" value="Malic_NAD-bd"/>
</dbReference>
<dbReference type="InterPro" id="IPR001891">
    <property type="entry name" value="Malic_OxRdtase"/>
</dbReference>
<dbReference type="InterPro" id="IPR036291">
    <property type="entry name" value="NAD(P)-bd_dom_sf"/>
</dbReference>
<dbReference type="NCBIfam" id="NF010052">
    <property type="entry name" value="PRK13529.1"/>
    <property type="match status" value="1"/>
</dbReference>
<dbReference type="PANTHER" id="PTHR23406">
    <property type="entry name" value="MALIC ENZYME-RELATED"/>
    <property type="match status" value="1"/>
</dbReference>
<dbReference type="PANTHER" id="PTHR23406:SF34">
    <property type="entry name" value="NAD-DEPENDENT MALIC ENZYME, MITOCHONDRIAL"/>
    <property type="match status" value="1"/>
</dbReference>
<dbReference type="Pfam" id="PF00390">
    <property type="entry name" value="malic"/>
    <property type="match status" value="1"/>
</dbReference>
<dbReference type="Pfam" id="PF03949">
    <property type="entry name" value="Malic_M"/>
    <property type="match status" value="1"/>
</dbReference>
<dbReference type="PIRSF" id="PIRSF000106">
    <property type="entry name" value="ME"/>
    <property type="match status" value="1"/>
</dbReference>
<dbReference type="PRINTS" id="PR00072">
    <property type="entry name" value="MALOXRDTASE"/>
</dbReference>
<dbReference type="SMART" id="SM01274">
    <property type="entry name" value="malic"/>
    <property type="match status" value="1"/>
</dbReference>
<dbReference type="SMART" id="SM00919">
    <property type="entry name" value="Malic_M"/>
    <property type="match status" value="1"/>
</dbReference>
<dbReference type="SUPFAM" id="SSF53223">
    <property type="entry name" value="Aminoacid dehydrogenase-like, N-terminal domain"/>
    <property type="match status" value="1"/>
</dbReference>
<dbReference type="SUPFAM" id="SSF51735">
    <property type="entry name" value="NAD(P)-binding Rossmann-fold domains"/>
    <property type="match status" value="1"/>
</dbReference>
<dbReference type="PROSITE" id="PS00331">
    <property type="entry name" value="MALIC_ENZYMES"/>
    <property type="match status" value="1"/>
</dbReference>
<accession>P9WK25</accession>
<accession>L0T9I1</accession>
<accession>P71880</accession>
<evidence type="ECO:0000250" key="1"/>
<evidence type="ECO:0000250" key="2">
    <source>
        <dbReference type="UniProtKB" id="P40927"/>
    </source>
</evidence>
<evidence type="ECO:0000305" key="3"/>